<proteinExistence type="predicted"/>
<protein>
    <recommendedName>
        <fullName>Uncharacterized protein MT2709</fullName>
    </recommendedName>
</protein>
<sequence length="161" mass="18242">MNAYDVLKRHHTVLKGLGRKVGEAPVNSEERHVLFDEMLIELDIHFRIEDDLYYPALSAAGKPITGTHAEHRQVVDQLATLLRTPQRAPGYEEEWNVFRTVLEAHADVEERDMIPAPTPVHITDAELEELGDKMAARIEQLRGSPLYTLRTKGKADLLKAI</sequence>
<name>Y2633_MYCTO</name>
<keyword id="KW-1185">Reference proteome</keyword>
<organism>
    <name type="scientific">Mycobacterium tuberculosis (strain CDC 1551 / Oshkosh)</name>
    <dbReference type="NCBI Taxonomy" id="83331"/>
    <lineage>
        <taxon>Bacteria</taxon>
        <taxon>Bacillati</taxon>
        <taxon>Actinomycetota</taxon>
        <taxon>Actinomycetes</taxon>
        <taxon>Mycobacteriales</taxon>
        <taxon>Mycobacteriaceae</taxon>
        <taxon>Mycobacterium</taxon>
        <taxon>Mycobacterium tuberculosis complex</taxon>
    </lineage>
</organism>
<reference key="1">
    <citation type="journal article" date="2002" name="J. Bacteriol.">
        <title>Whole-genome comparison of Mycobacterium tuberculosis clinical and laboratory strains.</title>
        <authorList>
            <person name="Fleischmann R.D."/>
            <person name="Alland D."/>
            <person name="Eisen J.A."/>
            <person name="Carpenter L."/>
            <person name="White O."/>
            <person name="Peterson J.D."/>
            <person name="DeBoy R.T."/>
            <person name="Dodson R.J."/>
            <person name="Gwinn M.L."/>
            <person name="Haft D.H."/>
            <person name="Hickey E.K."/>
            <person name="Kolonay J.F."/>
            <person name="Nelson W.C."/>
            <person name="Umayam L.A."/>
            <person name="Ermolaeva M.D."/>
            <person name="Salzberg S.L."/>
            <person name="Delcher A."/>
            <person name="Utterback T.R."/>
            <person name="Weidman J.F."/>
            <person name="Khouri H.M."/>
            <person name="Gill J."/>
            <person name="Mikula A."/>
            <person name="Bishai W."/>
            <person name="Jacobs W.R. Jr."/>
            <person name="Venter J.C."/>
            <person name="Fraser C.M."/>
        </authorList>
    </citation>
    <scope>NUCLEOTIDE SEQUENCE [LARGE SCALE GENOMIC DNA]</scope>
    <source>
        <strain>CDC 1551 / Oshkosh</strain>
    </source>
</reference>
<dbReference type="EMBL" id="AE000516">
    <property type="protein sequence ID" value="AAK47024.1"/>
    <property type="molecule type" value="Genomic_DNA"/>
</dbReference>
<dbReference type="PIR" id="E70963">
    <property type="entry name" value="E70963"/>
</dbReference>
<dbReference type="RefSeq" id="WP_003413625.1">
    <property type="nucleotide sequence ID" value="NZ_KK341227.1"/>
</dbReference>
<dbReference type="SMR" id="P9WL58"/>
<dbReference type="KEGG" id="mtc:MT2709"/>
<dbReference type="PATRIC" id="fig|83331.31.peg.2920"/>
<dbReference type="HOGENOM" id="CLU_079417_6_2_11"/>
<dbReference type="Proteomes" id="UP000001020">
    <property type="component" value="Chromosome"/>
</dbReference>
<dbReference type="Gene3D" id="1.20.120.520">
    <property type="entry name" value="nmb1532 protein domain like"/>
    <property type="match status" value="1"/>
</dbReference>
<dbReference type="InterPro" id="IPR012312">
    <property type="entry name" value="Hemerythrin-like"/>
</dbReference>
<dbReference type="PANTHER" id="PTHR35585">
    <property type="entry name" value="HHE DOMAIN PROTEIN (AFU_ORTHOLOGUE AFUA_4G00730)"/>
    <property type="match status" value="1"/>
</dbReference>
<dbReference type="PANTHER" id="PTHR35585:SF1">
    <property type="entry name" value="HHE DOMAIN PROTEIN (AFU_ORTHOLOGUE AFUA_4G00730)"/>
    <property type="match status" value="1"/>
</dbReference>
<dbReference type="Pfam" id="PF01814">
    <property type="entry name" value="Hemerythrin"/>
    <property type="match status" value="1"/>
</dbReference>
<gene>
    <name type="ordered locus">MT2709</name>
</gene>
<accession>P9WL58</accession>
<accession>L0TAG1</accession>
<accession>P65035</accession>
<accession>P71932</accession>
<feature type="chain" id="PRO_0000427536" description="Uncharacterized protein MT2709">
    <location>
        <begin position="1"/>
        <end position="161"/>
    </location>
</feature>